<keyword id="KW-0025">Alternative splicing</keyword>
<keyword id="KW-0963">Cytoplasm</keyword>
<keyword id="KW-0968">Cytoplasmic vesicle</keyword>
<keyword id="KW-0254">Endocytosis</keyword>
<keyword id="KW-0446">Lipid-binding</keyword>
<keyword id="KW-0488">Methylation</keyword>
<keyword id="KW-0597">Phosphoprotein</keyword>
<keyword id="KW-1267">Proteomics identification</keyword>
<keyword id="KW-1185">Reference proteome</keyword>
<keyword id="KW-0677">Repeat</keyword>
<keyword id="KW-0832">Ubl conjugation</keyword>
<sequence>MTTSSIRRQMKNIVNNYSEAEIKVREATSNDPWGPSSSLMTEIADLTYNVVAFSEIMSMVWKRLNDHGKNWRHVYKALTLLDYLIKTGSERVAQQCRENIFAIQTLKDFQYIDRDGKDQGINVREKSKQLVALLKDEERLKAERAQALKTKERMAQVATGMGSNQITFGRGSSQPNLSTSHSEQEYGKAGGSPASYHGSPEASLCPQHRTGAPLGQSEELQPLSQRHPFLPHLGLASRPNGDWSQPCLTCDRAARATSPRVSSELEQARPQTSGEEELQLQLALAMSREVAEQEERLRRGDDLRLQMALEESRRDTVKIPKKKEHGSLPQQTTLLDLMDALPSSGPAAQKAEPWGPSASTNQTNPWGGPAAPASTSDPWPSFGTKPAASIDPWGVPTGATVQSVPKNSDPWAASQQPASSAGKRASDAWGAVSTTKPVSVSGSFELFSNLNGTIKDDFSEFDNLRTSKKTAESVTSLPSQNNGTTSPDPFESQPLTVASSKPSSARKTPESFLGPNAALVNLDSLVTRPAPPAQSLNPFLAPGAPATSAPVNPFQVNQPQPLTLNQLRGSPVLGTSTSFGPGPGVESMAVASMTSAAPQPALGATGSSLTPLGPAMMNMVGSVGIPPSAAQATGTTNPFLL</sequence>
<gene>
    <name type="primary">EPN2</name>
    <name type="synonym">KIAA1065</name>
</gene>
<protein>
    <recommendedName>
        <fullName>Epsin-2</fullName>
    </recommendedName>
    <alternativeName>
        <fullName>EPS-15-interacting protein 2</fullName>
    </alternativeName>
</protein>
<comment type="function">
    <text evidence="8">Plays a role in the formation of clathrin-coated invaginations and endocytosis.</text>
</comment>
<comment type="subunit">
    <text evidence="2 3 8 11">Binds EPS15 (By similarity). Interacts with ITSN1 (By similarity). Binds AP-2 and clathrin. Interacts with UBQLN2.</text>
</comment>
<comment type="interaction">
    <interactant intactId="EBI-11081732">
        <id>O95208</id>
    </interactant>
    <interactant intactId="EBI-2682386">
        <id>Q96PV0</id>
        <label>SYNGAP1</label>
    </interactant>
    <organismsDiffer>false</organismsDiffer>
    <experiments>2</experiments>
</comment>
<comment type="interaction">
    <interactant intactId="EBI-12135243">
        <id>O95208-2</id>
    </interactant>
    <interactant intactId="EBI-2339564">
        <id>Q8N5I2</id>
        <label>ARRDC1</label>
    </interactant>
    <organismsDiffer>false</organismsDiffer>
    <experiments>3</experiments>
</comment>
<comment type="interaction">
    <interactant intactId="EBI-12135243">
        <id>O95208-2</id>
    </interactant>
    <interactant intactId="EBI-12191751">
        <id>Q8TBH0</id>
        <label>ARRDC2</label>
    </interactant>
    <organismsDiffer>false</organismsDiffer>
    <experiments>3</experiments>
</comment>
<comment type="interaction">
    <interactant intactId="EBI-12135243">
        <id>O95208-2</id>
    </interactant>
    <interactant intactId="EBI-2875665">
        <id>Q96B67</id>
        <label>ARRDC3</label>
    </interactant>
    <organismsDiffer>false</organismsDiffer>
    <experiments>3</experiments>
</comment>
<comment type="interaction">
    <interactant intactId="EBI-12135243">
        <id>O95208-2</id>
    </interactant>
    <interactant intactId="EBI-930964">
        <id>P54253</id>
        <label>ATXN1</label>
    </interactant>
    <organismsDiffer>false</organismsDiffer>
    <experiments>3</experiments>
</comment>
<comment type="interaction">
    <interactant intactId="EBI-12135243">
        <id>O95208-2</id>
    </interactant>
    <interactant intactId="EBI-2876678">
        <id>Q9H305</id>
        <label>CDIP1</label>
    </interactant>
    <organismsDiffer>false</organismsDiffer>
    <experiments>3</experiments>
</comment>
<comment type="interaction">
    <interactant intactId="EBI-12135243">
        <id>O95208-2</id>
    </interactant>
    <interactant intactId="EBI-724310">
        <id>Q15038</id>
        <label>DAZAP2</label>
    </interactant>
    <organismsDiffer>false</organismsDiffer>
    <experiments>5</experiments>
</comment>
<comment type="interaction">
    <interactant intactId="EBI-12135243">
        <id>O95208-2</id>
    </interactant>
    <interactant intactId="EBI-347740">
        <id>P60228</id>
        <label>EIF3E</label>
    </interactant>
    <organismsDiffer>false</organismsDiffer>
    <experiments>3</experiments>
</comment>
<comment type="interaction">
    <interactant intactId="EBI-12135243">
        <id>O95208-2</id>
    </interactant>
    <interactant intactId="EBI-9056723">
        <id>Q9BWQ8</id>
        <label>FAIM2</label>
    </interactant>
    <organismsDiffer>false</organismsDiffer>
    <experiments>3</experiments>
</comment>
<comment type="interaction">
    <interactant intactId="EBI-12135243">
        <id>O95208-2</id>
    </interactant>
    <interactant intactId="EBI-11978259">
        <id>Q92567-2</id>
        <label>FAM168A</label>
    </interactant>
    <organismsDiffer>false</organismsDiffer>
    <experiments>3</experiments>
</comment>
<comment type="interaction">
    <interactant intactId="EBI-12135243">
        <id>O95208-2</id>
    </interactant>
    <interactant intactId="EBI-3957237">
        <id>Q8IYD8</id>
        <label>FANCM</label>
    </interactant>
    <organismsDiffer>false</organismsDiffer>
    <experiments>3</experiments>
</comment>
<comment type="interaction">
    <interactant intactId="EBI-12135243">
        <id>O95208-2</id>
    </interactant>
    <interactant intactId="EBI-725647">
        <id>Q99732</id>
        <label>LITAF</label>
    </interactant>
    <organismsDiffer>false</organismsDiffer>
    <experiments>5</experiments>
</comment>
<comment type="interaction">
    <interactant intactId="EBI-12135243">
        <id>O95208-2</id>
    </interactant>
    <interactant intactId="EBI-2340316">
        <id>O15344</id>
        <label>MID1</label>
    </interactant>
    <organismsDiffer>false</organismsDiffer>
    <experiments>3</experiments>
</comment>
<comment type="interaction">
    <interactant intactId="EBI-12135243">
        <id>O95208-2</id>
    </interactant>
    <interactant intactId="EBI-10172526">
        <id>Q9UJV3-2</id>
        <label>MID2</label>
    </interactant>
    <organismsDiffer>false</organismsDiffer>
    <experiments>3</experiments>
</comment>
<comment type="interaction">
    <interactant intactId="EBI-12135243">
        <id>O95208-2</id>
    </interactant>
    <interactant intactId="EBI-2509726">
        <id>Q16655</id>
        <label>MLANA</label>
    </interactant>
    <organismsDiffer>false</organismsDiffer>
    <experiments>3</experiments>
</comment>
<comment type="interaction">
    <interactant intactId="EBI-12135243">
        <id>O95208-2</id>
    </interactant>
    <interactant intactId="EBI-6164623">
        <id>Q86T03</id>
        <label>PIP4P1</label>
    </interactant>
    <organismsDiffer>false</organismsDiffer>
    <experiments>3</experiments>
</comment>
<comment type="interaction">
    <interactant intactId="EBI-12135243">
        <id>O95208-2</id>
    </interactant>
    <interactant intactId="EBI-373552">
        <id>Q96CS7</id>
        <label>PLEKHB2</label>
    </interactant>
    <organismsDiffer>false</organismsDiffer>
    <experiments>3</experiments>
</comment>
<comment type="interaction">
    <interactant intactId="EBI-12135243">
        <id>O95208-2</id>
    </interactant>
    <interactant intactId="EBI-13318883">
        <id>Q969W9-2</id>
        <label>PMEPA1</label>
    </interactant>
    <organismsDiffer>false</organismsDiffer>
    <experiments>3</experiments>
</comment>
<comment type="interaction">
    <interactant intactId="EBI-12135243">
        <id>O95208-2</id>
    </interactant>
    <interactant intactId="EBI-1383852">
        <id>P54646</id>
        <label>PRKAA2</label>
    </interactant>
    <organismsDiffer>false</organismsDiffer>
    <experiments>3</experiments>
</comment>
<comment type="interaction">
    <interactant intactId="EBI-12135243">
        <id>O95208-2</id>
    </interactant>
    <interactant intactId="EBI-373337">
        <id>O76064</id>
        <label>RNF8</label>
    </interactant>
    <organismsDiffer>false</organismsDiffer>
    <experiments>3</experiments>
</comment>
<comment type="interaction">
    <interactant intactId="EBI-12135243">
        <id>O95208-2</id>
    </interactant>
    <interactant intactId="EBI-1567153">
        <id>Q15797</id>
        <label>SMAD1</label>
    </interactant>
    <organismsDiffer>false</organismsDiffer>
    <experiments>3</experiments>
</comment>
<comment type="interaction">
    <interactant intactId="EBI-12135243">
        <id>O95208-2</id>
    </interactant>
    <interactant intactId="EBI-2643803">
        <id>Q8N0X7</id>
        <label>SPART</label>
    </interactant>
    <organismsDiffer>false</organismsDiffer>
    <experiments>3</experiments>
</comment>
<comment type="interaction">
    <interactant intactId="EBI-12135243">
        <id>O95208-2</id>
    </interactant>
    <interactant intactId="EBI-372399">
        <id>P52888</id>
        <label>THOP1</label>
    </interactant>
    <organismsDiffer>false</organismsDiffer>
    <experiments>3</experiments>
</comment>
<comment type="interaction">
    <interactant intactId="EBI-12135243">
        <id>O95208-2</id>
    </interactant>
    <interactant intactId="EBI-740098">
        <id>P36406</id>
        <label>TRIM23</label>
    </interactant>
    <organismsDiffer>false</organismsDiffer>
    <experiments>3</experiments>
</comment>
<comment type="interaction">
    <interactant intactId="EBI-12135243">
        <id>O95208-2</id>
    </interactant>
    <interactant intactId="EBI-2341136">
        <id>Q12899</id>
        <label>TRIM26</label>
    </interactant>
    <organismsDiffer>false</organismsDiffer>
    <experiments>3</experiments>
</comment>
<comment type="interaction">
    <interactant intactId="EBI-12135243">
        <id>O95208-2</id>
    </interactant>
    <interactant intactId="EBI-6929619">
        <id>Q9BVG3</id>
        <label>TRIM62</label>
    </interactant>
    <organismsDiffer>false</organismsDiffer>
    <experiments>3</experiments>
</comment>
<comment type="interaction">
    <interactant intactId="EBI-12135243">
        <id>O95208-2</id>
    </interactant>
    <interactant intactId="EBI-359793">
        <id>P40222</id>
        <label>TXLNA</label>
    </interactant>
    <organismsDiffer>false</organismsDiffer>
    <experiments>3</experiments>
</comment>
<comment type="interaction">
    <interactant intactId="EBI-12135243">
        <id>O95208-2</id>
    </interactant>
    <interactant intactId="EBI-357304">
        <id>P62987</id>
        <label>UBA52</label>
    </interactant>
    <organismsDiffer>false</organismsDiffer>
    <experiments>3</experiments>
</comment>
<comment type="interaction">
    <interactant intactId="EBI-12135243">
        <id>O95208-2</id>
    </interactant>
    <interactant intactId="EBI-3390054">
        <id>P0CG48</id>
        <label>UBC</label>
    </interactant>
    <organismsDiffer>false</organismsDiffer>
    <experiments>3</experiments>
</comment>
<comment type="interaction">
    <interactant intactId="EBI-12135243">
        <id>O95208-2</id>
    </interactant>
    <interactant intactId="EBI-3867685">
        <id>Q96G27</id>
        <label>WBP1</label>
    </interactant>
    <organismsDiffer>false</organismsDiffer>
    <experiments>3</experiments>
</comment>
<comment type="interaction">
    <interactant intactId="EBI-12135243">
        <id>O95208-2</id>
    </interactant>
    <interactant intactId="EBI-10316321">
        <id>Q9NX94</id>
        <label>WBP1L</label>
    </interactant>
    <organismsDiffer>false</organismsDiffer>
    <experiments>3</experiments>
</comment>
<comment type="interaction">
    <interactant intactId="EBI-12135243">
        <id>O95208-2</id>
    </interactant>
    <interactant intactId="EBI-727055">
        <id>Q969T9</id>
        <label>WBP2</label>
    </interactant>
    <organismsDiffer>false</organismsDiffer>
    <experiments>3</experiments>
</comment>
<comment type="subcellular location">
    <subcellularLocation>
        <location evidence="8">Cytoplasm</location>
    </subcellularLocation>
    <subcellularLocation>
        <location evidence="8">Cytoplasmic vesicle</location>
        <location evidence="8">Clathrin-coated vesicle</location>
    </subcellularLocation>
    <text>In punctate structures throughout the cell, associated with clathrin-coated vesicles, and particularly concentrated in the region of the Golgi complex.</text>
</comment>
<comment type="alternative products">
    <event type="alternative splicing"/>
    <isoform>
        <id>O95208-1</id>
        <name>1</name>
        <name>2b</name>
        <sequence type="displayed"/>
    </isoform>
    <isoform>
        <id>O95208-2</id>
        <name>2</name>
        <name>2a</name>
        <sequence type="described" ref="VSP_009155"/>
    </isoform>
    <isoform>
        <id>O95208-3</id>
        <name>3</name>
        <sequence type="described" ref="VSP_009154 VSP_009155"/>
    </isoform>
    <isoform>
        <id>O95208-5</id>
        <name>4</name>
        <sequence type="described" ref="VSP_047003"/>
    </isoform>
</comment>
<comment type="tissue specificity">
    <text evidence="8">Highest expression is found in brain. Detected at lower levels in lung and liver.</text>
</comment>
<comment type="domain">
    <text>The NPF repeat domain is involved in EPS15 binding.</text>
</comment>
<comment type="domain">
    <text>The DPW repeat domain is involved in AP-2 and clathrin binding.</text>
</comment>
<comment type="PTM">
    <text evidence="1">Ubiquitinated.</text>
</comment>
<comment type="similarity">
    <text evidence="15">Belongs to the epsin family.</text>
</comment>
<comment type="sequence caution" evidence="15">
    <conflict type="erroneous initiation">
        <sequence resource="EMBL-CDS" id="BAA83017"/>
    </conflict>
    <text>Extended N-terminus.</text>
</comment>
<comment type="sequence caution" evidence="15">
    <conflict type="erroneous termination">
        <sequence resource="EMBL-CDS" id="BAG52540"/>
    </conflict>
    <text>Truncated C-terminus.</text>
</comment>
<organism>
    <name type="scientific">Homo sapiens</name>
    <name type="common">Human</name>
    <dbReference type="NCBI Taxonomy" id="9606"/>
    <lineage>
        <taxon>Eukaryota</taxon>
        <taxon>Metazoa</taxon>
        <taxon>Chordata</taxon>
        <taxon>Craniata</taxon>
        <taxon>Vertebrata</taxon>
        <taxon>Euteleostomi</taxon>
        <taxon>Mammalia</taxon>
        <taxon>Eutheria</taxon>
        <taxon>Euarchontoglires</taxon>
        <taxon>Primates</taxon>
        <taxon>Haplorrhini</taxon>
        <taxon>Catarrhini</taxon>
        <taxon>Hominidae</taxon>
        <taxon>Homo</taxon>
    </lineage>
</organism>
<feature type="chain" id="PRO_0000074516" description="Epsin-2">
    <location>
        <begin position="1"/>
        <end position="641"/>
    </location>
</feature>
<feature type="domain" description="ENTH" evidence="5">
    <location>
        <begin position="12"/>
        <end position="144"/>
    </location>
</feature>
<feature type="domain" description="UIM 1" evidence="4">
    <location>
        <begin position="275"/>
        <end position="294"/>
    </location>
</feature>
<feature type="domain" description="UIM 2" evidence="4">
    <location>
        <begin position="300"/>
        <end position="319"/>
    </location>
</feature>
<feature type="repeat" description="1">
    <location>
        <begin position="352"/>
        <end position="354"/>
    </location>
</feature>
<feature type="repeat" description="2">
    <location>
        <begin position="364"/>
        <end position="366"/>
    </location>
</feature>
<feature type="repeat" description="3">
    <location>
        <begin position="377"/>
        <end position="379"/>
    </location>
</feature>
<feature type="repeat" description="4">
    <location>
        <begin position="391"/>
        <end position="393"/>
    </location>
</feature>
<feature type="repeat" description="5">
    <location>
        <begin position="409"/>
        <end position="411"/>
    </location>
</feature>
<feature type="repeat" description="6">
    <location>
        <begin position="427"/>
        <end position="429"/>
    </location>
</feature>
<feature type="repeat" description="1">
    <location>
        <begin position="537"/>
        <end position="539"/>
    </location>
</feature>
<feature type="repeat" description="2">
    <location>
        <begin position="552"/>
        <end position="554"/>
    </location>
</feature>
<feature type="repeat" description="3">
    <location>
        <begin position="637"/>
        <end position="639"/>
    </location>
</feature>
<feature type="region of interest" description="Disordered" evidence="6">
    <location>
        <begin position="163"/>
        <end position="214"/>
    </location>
</feature>
<feature type="region of interest" description="Disordered" evidence="6">
    <location>
        <begin position="255"/>
        <end position="275"/>
    </location>
</feature>
<feature type="region of interest" description="Disordered" evidence="6">
    <location>
        <begin position="340"/>
        <end position="425"/>
    </location>
</feature>
<feature type="region of interest" description="6 X 3 AA repeats of [DE]-P-W">
    <location>
        <begin position="352"/>
        <end position="639"/>
    </location>
</feature>
<feature type="region of interest" description="Disordered" evidence="6">
    <location>
        <begin position="470"/>
        <end position="512"/>
    </location>
</feature>
<feature type="region of interest" description="3 X 3 AA repeats of N-P-F">
    <location>
        <begin position="537"/>
        <end position="639"/>
    </location>
</feature>
<feature type="compositionally biased region" description="Polar residues" evidence="6">
    <location>
        <begin position="163"/>
        <end position="181"/>
    </location>
</feature>
<feature type="compositionally biased region" description="Polar residues" evidence="6">
    <location>
        <begin position="259"/>
        <end position="273"/>
    </location>
</feature>
<feature type="compositionally biased region" description="Low complexity" evidence="6">
    <location>
        <begin position="408"/>
        <end position="421"/>
    </location>
</feature>
<feature type="compositionally biased region" description="Polar residues" evidence="6">
    <location>
        <begin position="472"/>
        <end position="506"/>
    </location>
</feature>
<feature type="binding site" evidence="1">
    <location>
        <position position="8"/>
    </location>
    <ligand>
        <name>a 1,2-diacyl-sn-glycero-3-phospho-(1D-myo-inositol-4,5-bisphosphate)</name>
        <dbReference type="ChEBI" id="CHEBI:58456"/>
    </ligand>
</feature>
<feature type="binding site" evidence="1">
    <location>
        <position position="11"/>
    </location>
    <ligand>
        <name>a 1,2-diacyl-sn-glycero-3-phospho-(1D-myo-inositol-4,5-bisphosphate)</name>
        <dbReference type="ChEBI" id="CHEBI:58456"/>
    </ligand>
</feature>
<feature type="binding site" evidence="1">
    <location>
        <position position="25"/>
    </location>
    <ligand>
        <name>a 1,2-diacyl-sn-glycero-3-phospho-(1D-myo-inositol-4,5-bisphosphate)</name>
        <dbReference type="ChEBI" id="CHEBI:58456"/>
    </ligand>
</feature>
<feature type="binding site" evidence="1">
    <location>
        <position position="30"/>
    </location>
    <ligand>
        <name>a 1,2-diacyl-sn-glycero-3-phospho-(1D-myo-inositol-4,5-bisphosphate)</name>
        <dbReference type="ChEBI" id="CHEBI:58456"/>
    </ligand>
</feature>
<feature type="binding site" evidence="1">
    <location>
        <position position="63"/>
    </location>
    <ligand>
        <name>a 1,2-diacyl-sn-glycero-3-phospho-(1D-myo-inositol-4,5-bisphosphate)</name>
        <dbReference type="ChEBI" id="CHEBI:58456"/>
    </ligand>
</feature>
<feature type="binding site" evidence="1">
    <location>
        <position position="73"/>
    </location>
    <ligand>
        <name>a 1,2-diacyl-sn-glycero-3-phospho-(1D-myo-inositol-4,5-bisphosphate)</name>
        <dbReference type="ChEBI" id="CHEBI:58456"/>
    </ligand>
</feature>
<feature type="modified residue" description="Omega-N-methylarginine" evidence="2">
    <location>
        <position position="170"/>
    </location>
</feature>
<feature type="modified residue" description="Phosphoserine" evidence="18">
    <location>
        <position position="173"/>
    </location>
</feature>
<feature type="modified residue" description="Phosphoserine" evidence="2">
    <location>
        <position position="192"/>
    </location>
</feature>
<feature type="modified residue" description="Phosphoserine" evidence="3">
    <location>
        <position position="195"/>
    </location>
</feature>
<feature type="modified residue" description="Phosphoserine" evidence="3">
    <location>
        <position position="486"/>
    </location>
</feature>
<feature type="modified residue" description="Phosphothreonine" evidence="3">
    <location>
        <position position="508"/>
    </location>
</feature>
<feature type="modified residue" description="Phosphoserine" evidence="19">
    <location>
        <position position="570"/>
    </location>
</feature>
<feature type="splice variant" id="VSP_047003" description="In isoform 4." evidence="14">
    <location>
        <begin position="1"/>
        <end position="285"/>
    </location>
</feature>
<feature type="splice variant" id="VSP_009154" description="In isoform 3." evidence="14">
    <location>
        <begin position="1"/>
        <end position="39"/>
    </location>
</feature>
<feature type="splice variant" id="VSP_009155" description="In isoform 2 and isoform 3." evidence="13 14">
    <location>
        <begin position="200"/>
        <end position="256"/>
    </location>
</feature>
<feature type="sequence variant" id="VAR_053080" description="In dbSNP:rs6587220." evidence="7 8 9 10 12">
    <original>V</original>
    <variation>A</variation>
    <location>
        <position position="401"/>
    </location>
</feature>
<feature type="sequence variant" id="VAR_047923" description="In dbSNP:rs1062727.">
    <original>P</original>
    <variation>T</variation>
    <location>
        <position position="531"/>
    </location>
</feature>
<feature type="sequence variant" id="VAR_053081" description="In dbSNP:rs1062727.">
    <original>P</original>
    <variation>T</variation>
    <location>
        <position position="532"/>
    </location>
</feature>
<feature type="sequence conflict" description="In Ref. 1; AAC78609." evidence="15" ref="1">
    <original>A</original>
    <variation>AS</variation>
    <location>
        <position position="256"/>
    </location>
</feature>
<feature type="sequence conflict" description="In Ref. 1; AAC78608/AAC78609." evidence="15" ref="1">
    <original>T</original>
    <variation>N</variation>
    <location>
        <position position="547"/>
    </location>
</feature>
<feature type="modified residue" description="Phosphoserine" evidence="16 17 19">
    <location sequence="O95208-2">
        <position position="192"/>
    </location>
</feature>
<feature type="modified residue" description="Phosphoserine" evidence="17">
    <location sequence="O95208-2">
        <position position="195"/>
    </location>
</feature>
<feature type="modified residue" description="Phosphoserine" evidence="16 17 19">
    <location sequence="O95208-3">
        <position position="153"/>
    </location>
</feature>
<feature type="modified residue" description="Phosphoserine" evidence="17">
    <location sequence="O95208-3">
        <position position="156"/>
    </location>
</feature>
<name>EPN2_HUMAN</name>
<dbReference type="EMBL" id="AF062084">
    <property type="protein sequence ID" value="AAC78608.1"/>
    <property type="molecule type" value="mRNA"/>
</dbReference>
<dbReference type="EMBL" id="AF062085">
    <property type="protein sequence ID" value="AAC78609.1"/>
    <property type="molecule type" value="mRNA"/>
</dbReference>
<dbReference type="EMBL" id="AB028988">
    <property type="protein sequence ID" value="BAA83017.2"/>
    <property type="status" value="ALT_INIT"/>
    <property type="molecule type" value="mRNA"/>
</dbReference>
<dbReference type="EMBL" id="AK001996">
    <property type="protein sequence ID" value="BAG51000.1"/>
    <property type="molecule type" value="mRNA"/>
</dbReference>
<dbReference type="EMBL" id="AK024115">
    <property type="protein sequence ID" value="BAB14831.1"/>
    <property type="molecule type" value="mRNA"/>
</dbReference>
<dbReference type="EMBL" id="AK092366">
    <property type="protein sequence ID" value="BAG52540.1"/>
    <property type="status" value="ALT_SEQ"/>
    <property type="molecule type" value="mRNA"/>
</dbReference>
<dbReference type="EMBL" id="AC106017">
    <property type="status" value="NOT_ANNOTATED_CDS"/>
    <property type="molecule type" value="Genomic_DNA"/>
</dbReference>
<dbReference type="EMBL" id="AC124066">
    <property type="status" value="NOT_ANNOTATED_CDS"/>
    <property type="molecule type" value="Genomic_DNA"/>
</dbReference>
<dbReference type="EMBL" id="CH471212">
    <property type="protein sequence ID" value="EAW50876.1"/>
    <property type="molecule type" value="Genomic_DNA"/>
</dbReference>
<dbReference type="EMBL" id="BC093972">
    <property type="protein sequence ID" value="AAH93972.1"/>
    <property type="molecule type" value="mRNA"/>
</dbReference>
<dbReference type="EMBL" id="BC093974">
    <property type="protein sequence ID" value="AAH93974.1"/>
    <property type="molecule type" value="mRNA"/>
</dbReference>
<dbReference type="CCDS" id="CCDS11203.1">
    <molecule id="O95208-1"/>
</dbReference>
<dbReference type="CCDS" id="CCDS11204.1">
    <molecule id="O95208-2"/>
</dbReference>
<dbReference type="CCDS" id="CCDS42277.1">
    <molecule id="O95208-5"/>
</dbReference>
<dbReference type="RefSeq" id="NP_001096134.1">
    <molecule id="O95208-5"/>
    <property type="nucleotide sequence ID" value="NM_001102664.2"/>
</dbReference>
<dbReference type="RefSeq" id="NP_055779.2">
    <molecule id="O95208-1"/>
    <property type="nucleotide sequence ID" value="NM_014964.5"/>
</dbReference>
<dbReference type="RefSeq" id="NP_683723.2">
    <molecule id="O95208-2"/>
    <property type="nucleotide sequence ID" value="NM_148921.4"/>
</dbReference>
<dbReference type="SMR" id="O95208"/>
<dbReference type="BioGRID" id="116569">
    <property type="interactions" value="105"/>
</dbReference>
<dbReference type="ELM" id="O95208"/>
<dbReference type="FunCoup" id="O95208">
    <property type="interactions" value="1874"/>
</dbReference>
<dbReference type="IntAct" id="O95208">
    <property type="interactions" value="69"/>
</dbReference>
<dbReference type="MINT" id="O95208"/>
<dbReference type="STRING" id="9606.ENSP00000320543"/>
<dbReference type="GlyCosmos" id="O95208">
    <property type="glycosylation" value="1 site, 1 glycan"/>
</dbReference>
<dbReference type="GlyGen" id="O95208">
    <property type="glycosylation" value="2 sites, 2 O-linked glycans (2 sites)"/>
</dbReference>
<dbReference type="iPTMnet" id="O95208"/>
<dbReference type="PhosphoSitePlus" id="O95208"/>
<dbReference type="BioMuta" id="EPN2"/>
<dbReference type="jPOST" id="O95208"/>
<dbReference type="MassIVE" id="O95208"/>
<dbReference type="PaxDb" id="9606-ENSP00000320543"/>
<dbReference type="PeptideAtlas" id="O95208"/>
<dbReference type="ProteomicsDB" id="19190"/>
<dbReference type="ProteomicsDB" id="2056"/>
<dbReference type="ProteomicsDB" id="50717">
    <molecule id="O95208-1"/>
</dbReference>
<dbReference type="ProteomicsDB" id="50718">
    <molecule id="O95208-2"/>
</dbReference>
<dbReference type="ProteomicsDB" id="50719">
    <molecule id="O95208-3"/>
</dbReference>
<dbReference type="Pumba" id="O95208"/>
<dbReference type="Antibodypedia" id="25881">
    <property type="antibodies" value="350 antibodies from 27 providers"/>
</dbReference>
<dbReference type="DNASU" id="22905"/>
<dbReference type="Ensembl" id="ENST00000314728.10">
    <molecule id="O95208-1"/>
    <property type="protein sequence ID" value="ENSP00000320543.5"/>
    <property type="gene ID" value="ENSG00000072134.16"/>
</dbReference>
<dbReference type="Ensembl" id="ENST00000347697.6">
    <molecule id="O95208-2"/>
    <property type="protein sequence ID" value="ENSP00000261495.3"/>
    <property type="gene ID" value="ENSG00000072134.16"/>
</dbReference>
<dbReference type="Ensembl" id="ENST00000395618.7">
    <molecule id="O95208-5"/>
    <property type="protein sequence ID" value="ENSP00000378980.3"/>
    <property type="gene ID" value="ENSG00000072134.16"/>
</dbReference>
<dbReference type="Ensembl" id="ENST00000395620.6">
    <molecule id="O95208-2"/>
    <property type="protein sequence ID" value="ENSP00000378982.2"/>
    <property type="gene ID" value="ENSG00000072134.16"/>
</dbReference>
<dbReference type="GeneID" id="22905"/>
<dbReference type="KEGG" id="hsa:22905"/>
<dbReference type="MANE-Select" id="ENST00000314728.10">
    <property type="protein sequence ID" value="ENSP00000320543.5"/>
    <property type="RefSeq nucleotide sequence ID" value="NM_014964.5"/>
    <property type="RefSeq protein sequence ID" value="NP_055779.2"/>
</dbReference>
<dbReference type="UCSC" id="uc002gvd.5">
    <molecule id="O95208-1"/>
    <property type="organism name" value="human"/>
</dbReference>
<dbReference type="AGR" id="HGNC:18639"/>
<dbReference type="CTD" id="22905"/>
<dbReference type="DisGeNET" id="22905"/>
<dbReference type="GeneCards" id="EPN2"/>
<dbReference type="HGNC" id="HGNC:18639">
    <property type="gene designation" value="EPN2"/>
</dbReference>
<dbReference type="HPA" id="ENSG00000072134">
    <property type="expression patterns" value="Low tissue specificity"/>
</dbReference>
<dbReference type="MIM" id="607263">
    <property type="type" value="gene"/>
</dbReference>
<dbReference type="neXtProt" id="NX_O95208"/>
<dbReference type="OpenTargets" id="ENSG00000072134"/>
<dbReference type="PharmGKB" id="PA38615"/>
<dbReference type="VEuPathDB" id="HostDB:ENSG00000072134"/>
<dbReference type="eggNOG" id="KOG2056">
    <property type="taxonomic scope" value="Eukaryota"/>
</dbReference>
<dbReference type="GeneTree" id="ENSGT00940000157239"/>
<dbReference type="InParanoid" id="O95208"/>
<dbReference type="OMA" id="YLIKCGS"/>
<dbReference type="OrthoDB" id="4033880at2759"/>
<dbReference type="PAN-GO" id="O95208">
    <property type="GO annotations" value="6 GO annotations based on evolutionary models"/>
</dbReference>
<dbReference type="PhylomeDB" id="O95208"/>
<dbReference type="TreeFam" id="TF313361"/>
<dbReference type="PathwayCommons" id="O95208"/>
<dbReference type="Reactome" id="R-HSA-8856825">
    <property type="pathway name" value="Cargo recognition for clathrin-mediated endocytosis"/>
</dbReference>
<dbReference type="Reactome" id="R-HSA-8856828">
    <property type="pathway name" value="Clathrin-mediated endocytosis"/>
</dbReference>
<dbReference type="SignaLink" id="O95208"/>
<dbReference type="BioGRID-ORCS" id="22905">
    <property type="hits" value="8 hits in 1159 CRISPR screens"/>
</dbReference>
<dbReference type="ChiTaRS" id="EPN2">
    <property type="organism name" value="human"/>
</dbReference>
<dbReference type="GeneWiki" id="EPN2"/>
<dbReference type="GenomeRNAi" id="22905"/>
<dbReference type="Pharos" id="O95208">
    <property type="development level" value="Tbio"/>
</dbReference>
<dbReference type="PRO" id="PR:O95208"/>
<dbReference type="Proteomes" id="UP000005640">
    <property type="component" value="Chromosome 17"/>
</dbReference>
<dbReference type="RNAct" id="O95208">
    <property type="molecule type" value="protein"/>
</dbReference>
<dbReference type="Bgee" id="ENSG00000072134">
    <property type="expression patterns" value="Expressed in colonic epithelium and 199 other cell types or tissues"/>
</dbReference>
<dbReference type="ExpressionAtlas" id="O95208">
    <property type="expression patterns" value="baseline and differential"/>
</dbReference>
<dbReference type="GO" id="GO:0030125">
    <property type="term" value="C:clathrin vesicle coat"/>
    <property type="evidence" value="ECO:0000318"/>
    <property type="project" value="GO_Central"/>
</dbReference>
<dbReference type="GO" id="GO:0005829">
    <property type="term" value="C:cytosol"/>
    <property type="evidence" value="ECO:0000304"/>
    <property type="project" value="Reactome"/>
</dbReference>
<dbReference type="GO" id="GO:0005768">
    <property type="term" value="C:endosome"/>
    <property type="evidence" value="ECO:0000318"/>
    <property type="project" value="GO_Central"/>
</dbReference>
<dbReference type="GO" id="GO:0043231">
    <property type="term" value="C:intracellular membrane-bounded organelle"/>
    <property type="evidence" value="ECO:0000314"/>
    <property type="project" value="HPA"/>
</dbReference>
<dbReference type="GO" id="GO:0005886">
    <property type="term" value="C:plasma membrane"/>
    <property type="evidence" value="ECO:0000318"/>
    <property type="project" value="GO_Central"/>
</dbReference>
<dbReference type="GO" id="GO:0045296">
    <property type="term" value="F:cadherin binding"/>
    <property type="evidence" value="ECO:0007005"/>
    <property type="project" value="BHF-UCL"/>
</dbReference>
<dbReference type="GO" id="GO:0030276">
    <property type="term" value="F:clathrin binding"/>
    <property type="evidence" value="ECO:0000318"/>
    <property type="project" value="GO_Central"/>
</dbReference>
<dbReference type="GO" id="GO:0005543">
    <property type="term" value="F:phospholipid binding"/>
    <property type="evidence" value="ECO:0000318"/>
    <property type="project" value="GO_Central"/>
</dbReference>
<dbReference type="GO" id="GO:0006897">
    <property type="term" value="P:endocytosis"/>
    <property type="evidence" value="ECO:0000318"/>
    <property type="project" value="GO_Central"/>
</dbReference>
<dbReference type="GO" id="GO:1903671">
    <property type="term" value="P:negative regulation of sprouting angiogenesis"/>
    <property type="evidence" value="ECO:0000315"/>
    <property type="project" value="BHF-UCL"/>
</dbReference>
<dbReference type="GO" id="GO:0030948">
    <property type="term" value="P:negative regulation of vascular endothelial growth factor receptor signaling pathway"/>
    <property type="evidence" value="ECO:0000315"/>
    <property type="project" value="BHF-UCL"/>
</dbReference>
<dbReference type="GO" id="GO:0045747">
    <property type="term" value="P:positive regulation of Notch signaling pathway"/>
    <property type="evidence" value="ECO:0000315"/>
    <property type="project" value="BHF-UCL"/>
</dbReference>
<dbReference type="CDD" id="cd16990">
    <property type="entry name" value="ENTH_Epsin"/>
    <property type="match status" value="1"/>
</dbReference>
<dbReference type="FunFam" id="1.25.40.90:FF:000002">
    <property type="entry name" value="epsin-2 isoform X1"/>
    <property type="match status" value="1"/>
</dbReference>
<dbReference type="Gene3D" id="1.25.40.90">
    <property type="match status" value="1"/>
</dbReference>
<dbReference type="InterPro" id="IPR013809">
    <property type="entry name" value="ENTH"/>
</dbReference>
<dbReference type="InterPro" id="IPR008942">
    <property type="entry name" value="ENTH_VHS"/>
</dbReference>
<dbReference type="InterPro" id="IPR003903">
    <property type="entry name" value="UIM_dom"/>
</dbReference>
<dbReference type="PANTHER" id="PTHR12276:SF50">
    <property type="entry name" value="EPSIN-2"/>
    <property type="match status" value="1"/>
</dbReference>
<dbReference type="PANTHER" id="PTHR12276">
    <property type="entry name" value="EPSIN/ENT-RELATED"/>
    <property type="match status" value="1"/>
</dbReference>
<dbReference type="Pfam" id="PF01417">
    <property type="entry name" value="ENTH"/>
    <property type="match status" value="1"/>
</dbReference>
<dbReference type="SMART" id="SM00273">
    <property type="entry name" value="ENTH"/>
    <property type="match status" value="1"/>
</dbReference>
<dbReference type="SMART" id="SM00726">
    <property type="entry name" value="UIM"/>
    <property type="match status" value="2"/>
</dbReference>
<dbReference type="SUPFAM" id="SSF48464">
    <property type="entry name" value="ENTH/VHS domain"/>
    <property type="match status" value="1"/>
</dbReference>
<dbReference type="PROSITE" id="PS50942">
    <property type="entry name" value="ENTH"/>
    <property type="match status" value="1"/>
</dbReference>
<dbReference type="PROSITE" id="PS50330">
    <property type="entry name" value="UIM"/>
    <property type="match status" value="2"/>
</dbReference>
<reference key="1">
    <citation type="journal article" date="1999" name="J. Biol. Chem.">
        <title>The epsins define a family of proteins that interact with components of the clathrin coat and contain a new protein module.</title>
        <authorList>
            <person name="Rosenthal J.A."/>
            <person name="Chen H."/>
            <person name="Slepnev V.I."/>
            <person name="Pellegrini L."/>
            <person name="Salcini A.E."/>
            <person name="Di Fiore P.P."/>
            <person name="De Camilli P."/>
        </authorList>
    </citation>
    <scope>NUCLEOTIDE SEQUENCE [MRNA] (ISOFORMS 1 AND 2)</scope>
    <scope>FUNCTION</scope>
    <scope>INTERACTION WITH AP-2 AND CLATHRIN</scope>
    <scope>SUBCELLULAR LOCATION</scope>
    <scope>TISSUE SPECIFICITY</scope>
    <scope>VARIANT ALA-401</scope>
    <source>
        <tissue>Brain</tissue>
    </source>
</reference>
<reference key="2">
    <citation type="journal article" date="1999" name="DNA Res.">
        <title>Prediction of the coding sequences of unidentified human genes. XIV. The complete sequences of 100 new cDNA clones from brain which code for large proteins in vitro.</title>
        <authorList>
            <person name="Kikuno R."/>
            <person name="Nagase T."/>
            <person name="Ishikawa K."/>
            <person name="Hirosawa M."/>
            <person name="Miyajima N."/>
            <person name="Tanaka A."/>
            <person name="Kotani H."/>
            <person name="Nomura N."/>
            <person name="Ohara O."/>
        </authorList>
    </citation>
    <scope>NUCLEOTIDE SEQUENCE [LARGE SCALE MRNA] (ISOFORM 1)</scope>
    <scope>VARIANT ALA-401</scope>
    <source>
        <tissue>Brain</tissue>
    </source>
</reference>
<reference key="3">
    <citation type="journal article" date="2004" name="Nat. Genet.">
        <title>Complete sequencing and characterization of 21,243 full-length human cDNAs.</title>
        <authorList>
            <person name="Ota T."/>
            <person name="Suzuki Y."/>
            <person name="Nishikawa T."/>
            <person name="Otsuki T."/>
            <person name="Sugiyama T."/>
            <person name="Irie R."/>
            <person name="Wakamatsu A."/>
            <person name="Hayashi K."/>
            <person name="Sato H."/>
            <person name="Nagai K."/>
            <person name="Kimura K."/>
            <person name="Makita H."/>
            <person name="Sekine M."/>
            <person name="Obayashi M."/>
            <person name="Nishi T."/>
            <person name="Shibahara T."/>
            <person name="Tanaka T."/>
            <person name="Ishii S."/>
            <person name="Yamamoto J."/>
            <person name="Saito K."/>
            <person name="Kawai Y."/>
            <person name="Isono Y."/>
            <person name="Nakamura Y."/>
            <person name="Nagahari K."/>
            <person name="Murakami K."/>
            <person name="Yasuda T."/>
            <person name="Iwayanagi T."/>
            <person name="Wagatsuma M."/>
            <person name="Shiratori A."/>
            <person name="Sudo H."/>
            <person name="Hosoiri T."/>
            <person name="Kaku Y."/>
            <person name="Kodaira H."/>
            <person name="Kondo H."/>
            <person name="Sugawara M."/>
            <person name="Takahashi M."/>
            <person name="Kanda K."/>
            <person name="Yokoi T."/>
            <person name="Furuya T."/>
            <person name="Kikkawa E."/>
            <person name="Omura Y."/>
            <person name="Abe K."/>
            <person name="Kamihara K."/>
            <person name="Katsuta N."/>
            <person name="Sato K."/>
            <person name="Tanikawa M."/>
            <person name="Yamazaki M."/>
            <person name="Ninomiya K."/>
            <person name="Ishibashi T."/>
            <person name="Yamashita H."/>
            <person name="Murakawa K."/>
            <person name="Fujimori K."/>
            <person name="Tanai H."/>
            <person name="Kimata M."/>
            <person name="Watanabe M."/>
            <person name="Hiraoka S."/>
            <person name="Chiba Y."/>
            <person name="Ishida S."/>
            <person name="Ono Y."/>
            <person name="Takiguchi S."/>
            <person name="Watanabe S."/>
            <person name="Yosida M."/>
            <person name="Hotuta T."/>
            <person name="Kusano J."/>
            <person name="Kanehori K."/>
            <person name="Takahashi-Fujii A."/>
            <person name="Hara H."/>
            <person name="Tanase T.-O."/>
            <person name="Nomura Y."/>
            <person name="Togiya S."/>
            <person name="Komai F."/>
            <person name="Hara R."/>
            <person name="Takeuchi K."/>
            <person name="Arita M."/>
            <person name="Imose N."/>
            <person name="Musashino K."/>
            <person name="Yuuki H."/>
            <person name="Oshima A."/>
            <person name="Sasaki N."/>
            <person name="Aotsuka S."/>
            <person name="Yoshikawa Y."/>
            <person name="Matsunawa H."/>
            <person name="Ichihara T."/>
            <person name="Shiohata N."/>
            <person name="Sano S."/>
            <person name="Moriya S."/>
            <person name="Momiyama H."/>
            <person name="Satoh N."/>
            <person name="Takami S."/>
            <person name="Terashima Y."/>
            <person name="Suzuki O."/>
            <person name="Nakagawa S."/>
            <person name="Senoh A."/>
            <person name="Mizoguchi H."/>
            <person name="Goto Y."/>
            <person name="Shimizu F."/>
            <person name="Wakebe H."/>
            <person name="Hishigaki H."/>
            <person name="Watanabe T."/>
            <person name="Sugiyama A."/>
            <person name="Takemoto M."/>
            <person name="Kawakami B."/>
            <person name="Yamazaki M."/>
            <person name="Watanabe K."/>
            <person name="Kumagai A."/>
            <person name="Itakura S."/>
            <person name="Fukuzumi Y."/>
            <person name="Fujimori Y."/>
            <person name="Komiyama M."/>
            <person name="Tashiro H."/>
            <person name="Tanigami A."/>
            <person name="Fujiwara T."/>
            <person name="Ono T."/>
            <person name="Yamada K."/>
            <person name="Fujii Y."/>
            <person name="Ozaki K."/>
            <person name="Hirao M."/>
            <person name="Ohmori Y."/>
            <person name="Kawabata A."/>
            <person name="Hikiji T."/>
            <person name="Kobatake N."/>
            <person name="Inagaki H."/>
            <person name="Ikema Y."/>
            <person name="Okamoto S."/>
            <person name="Okitani R."/>
            <person name="Kawakami T."/>
            <person name="Noguchi S."/>
            <person name="Itoh T."/>
            <person name="Shigeta K."/>
            <person name="Senba T."/>
            <person name="Matsumura K."/>
            <person name="Nakajima Y."/>
            <person name="Mizuno T."/>
            <person name="Morinaga M."/>
            <person name="Sasaki M."/>
            <person name="Togashi T."/>
            <person name="Oyama M."/>
            <person name="Hata H."/>
            <person name="Watanabe M."/>
            <person name="Komatsu T."/>
            <person name="Mizushima-Sugano J."/>
            <person name="Satoh T."/>
            <person name="Shirai Y."/>
            <person name="Takahashi Y."/>
            <person name="Nakagawa K."/>
            <person name="Okumura K."/>
            <person name="Nagase T."/>
            <person name="Nomura N."/>
            <person name="Kikuchi H."/>
            <person name="Masuho Y."/>
            <person name="Yamashita R."/>
            <person name="Nakai K."/>
            <person name="Yada T."/>
            <person name="Nakamura Y."/>
            <person name="Ohara O."/>
            <person name="Isogai T."/>
            <person name="Sugano S."/>
        </authorList>
    </citation>
    <scope>NUCLEOTIDE SEQUENCE [LARGE SCALE MRNA] (ISOFORMS 2 AND 4)</scope>
    <scope>NUCLEOTIDE SEQUENCE [LARGE SCALE MRNA] OF 1-467 (ISOFORM 3)</scope>
    <scope>VARIANT ALA-401</scope>
    <source>
        <tissue>Embryo</tissue>
        <tissue>Fetal brain</tissue>
        <tissue>Placenta</tissue>
    </source>
</reference>
<reference key="4">
    <citation type="journal article" date="2006" name="Nature">
        <title>DNA sequence of human chromosome 17 and analysis of rearrangement in the human lineage.</title>
        <authorList>
            <person name="Zody M.C."/>
            <person name="Garber M."/>
            <person name="Adams D.J."/>
            <person name="Sharpe T."/>
            <person name="Harrow J."/>
            <person name="Lupski J.R."/>
            <person name="Nicholson C."/>
            <person name="Searle S.M."/>
            <person name="Wilming L."/>
            <person name="Young S.K."/>
            <person name="Abouelleil A."/>
            <person name="Allen N.R."/>
            <person name="Bi W."/>
            <person name="Bloom T."/>
            <person name="Borowsky M.L."/>
            <person name="Bugalter B.E."/>
            <person name="Butler J."/>
            <person name="Chang J.L."/>
            <person name="Chen C.-K."/>
            <person name="Cook A."/>
            <person name="Corum B."/>
            <person name="Cuomo C.A."/>
            <person name="de Jong P.J."/>
            <person name="DeCaprio D."/>
            <person name="Dewar K."/>
            <person name="FitzGerald M."/>
            <person name="Gilbert J."/>
            <person name="Gibson R."/>
            <person name="Gnerre S."/>
            <person name="Goldstein S."/>
            <person name="Grafham D.V."/>
            <person name="Grocock R."/>
            <person name="Hafez N."/>
            <person name="Hagopian D.S."/>
            <person name="Hart E."/>
            <person name="Norman C.H."/>
            <person name="Humphray S."/>
            <person name="Jaffe D.B."/>
            <person name="Jones M."/>
            <person name="Kamal M."/>
            <person name="Khodiyar V.K."/>
            <person name="LaButti K."/>
            <person name="Laird G."/>
            <person name="Lehoczky J."/>
            <person name="Liu X."/>
            <person name="Lokyitsang T."/>
            <person name="Loveland J."/>
            <person name="Lui A."/>
            <person name="Macdonald P."/>
            <person name="Major J.E."/>
            <person name="Matthews L."/>
            <person name="Mauceli E."/>
            <person name="McCarroll S.A."/>
            <person name="Mihalev A.H."/>
            <person name="Mudge J."/>
            <person name="Nguyen C."/>
            <person name="Nicol R."/>
            <person name="O'Leary S.B."/>
            <person name="Osoegawa K."/>
            <person name="Schwartz D.C."/>
            <person name="Shaw-Smith C."/>
            <person name="Stankiewicz P."/>
            <person name="Steward C."/>
            <person name="Swarbreck D."/>
            <person name="Venkataraman V."/>
            <person name="Whittaker C.A."/>
            <person name="Yang X."/>
            <person name="Zimmer A.R."/>
            <person name="Bradley A."/>
            <person name="Hubbard T."/>
            <person name="Birren B.W."/>
            <person name="Rogers J."/>
            <person name="Lander E.S."/>
            <person name="Nusbaum C."/>
        </authorList>
    </citation>
    <scope>NUCLEOTIDE SEQUENCE [LARGE SCALE GENOMIC DNA]</scope>
</reference>
<reference key="5">
    <citation type="submission" date="2005-07" db="EMBL/GenBank/DDBJ databases">
        <authorList>
            <person name="Mural R.J."/>
            <person name="Istrail S."/>
            <person name="Sutton G.G."/>
            <person name="Florea L."/>
            <person name="Halpern A.L."/>
            <person name="Mobarry C.M."/>
            <person name="Lippert R."/>
            <person name="Walenz B."/>
            <person name="Shatkay H."/>
            <person name="Dew I."/>
            <person name="Miller J.R."/>
            <person name="Flanigan M.J."/>
            <person name="Edwards N.J."/>
            <person name="Bolanos R."/>
            <person name="Fasulo D."/>
            <person name="Halldorsson B.V."/>
            <person name="Hannenhalli S."/>
            <person name="Turner R."/>
            <person name="Yooseph S."/>
            <person name="Lu F."/>
            <person name="Nusskern D.R."/>
            <person name="Shue B.C."/>
            <person name="Zheng X.H."/>
            <person name="Zhong F."/>
            <person name="Delcher A.L."/>
            <person name="Huson D.H."/>
            <person name="Kravitz S.A."/>
            <person name="Mouchard L."/>
            <person name="Reinert K."/>
            <person name="Remington K.A."/>
            <person name="Clark A.G."/>
            <person name="Waterman M.S."/>
            <person name="Eichler E.E."/>
            <person name="Adams M.D."/>
            <person name="Hunkapiller M.W."/>
            <person name="Myers E.W."/>
            <person name="Venter J.C."/>
        </authorList>
    </citation>
    <scope>NUCLEOTIDE SEQUENCE [LARGE SCALE GENOMIC DNA]</scope>
    <scope>VARIANT ALA-401</scope>
</reference>
<reference key="6">
    <citation type="journal article" date="2004" name="Genome Res.">
        <title>The status, quality, and expansion of the NIH full-length cDNA project: the Mammalian Gene Collection (MGC).</title>
        <authorList>
            <consortium name="The MGC Project Team"/>
        </authorList>
    </citation>
    <scope>NUCLEOTIDE SEQUENCE [LARGE SCALE MRNA]</scope>
    <scope>VARIANT ALA-401</scope>
    <source>
        <tissue>Brain</tissue>
    </source>
</reference>
<reference key="7">
    <citation type="journal article" date="2006" name="Cell">
        <title>Global, in vivo, and site-specific phosphorylation dynamics in signaling networks.</title>
        <authorList>
            <person name="Olsen J.V."/>
            <person name="Blagoev B."/>
            <person name="Gnad F."/>
            <person name="Macek B."/>
            <person name="Kumar C."/>
            <person name="Mortensen P."/>
            <person name="Mann M."/>
        </authorList>
    </citation>
    <scope>PHOSPHORYLATION [LARGE SCALE ANALYSIS] AT SER-192 (ISOFORM 2)</scope>
    <scope>PHOSPHORYLATION [LARGE SCALE ANALYSIS] AT SER-153 (ISOFORM 3)</scope>
    <scope>IDENTIFICATION BY MASS SPECTROMETRY [LARGE SCALE ANALYSIS]</scope>
    <source>
        <tissue>Cervix carcinoma</tissue>
    </source>
</reference>
<reference key="8">
    <citation type="journal article" date="2008" name="Mol. Biol. Cell">
        <title>The ubiquitin-like protein PLIC-2 is a negative regulator of G protein-coupled receptor endocytosis.</title>
        <authorList>
            <person name="N'Diaye E.N."/>
            <person name="Hanyaloglu A.C."/>
            <person name="Kajihara K.K."/>
            <person name="Puthenveedu M.A."/>
            <person name="Wu P."/>
            <person name="von Zastrow M."/>
            <person name="Brown E.J."/>
        </authorList>
    </citation>
    <scope>INTERACTION WITH UBQLN2</scope>
</reference>
<reference key="9">
    <citation type="journal article" date="2009" name="Anal. Chem.">
        <title>Lys-N and trypsin cover complementary parts of the phosphoproteome in a refined SCX-based approach.</title>
        <authorList>
            <person name="Gauci S."/>
            <person name="Helbig A.O."/>
            <person name="Slijper M."/>
            <person name="Krijgsveld J."/>
            <person name="Heck A.J."/>
            <person name="Mohammed S."/>
        </authorList>
    </citation>
    <scope>IDENTIFICATION BY MASS SPECTROMETRY [LARGE SCALE ANALYSIS]</scope>
</reference>
<reference key="10">
    <citation type="journal article" date="2011" name="Sci. Signal.">
        <title>System-wide temporal characterization of the proteome and phosphoproteome of human embryonic stem cell differentiation.</title>
        <authorList>
            <person name="Rigbolt K.T."/>
            <person name="Prokhorova T.A."/>
            <person name="Akimov V."/>
            <person name="Henningsen J."/>
            <person name="Johansen P.T."/>
            <person name="Kratchmarova I."/>
            <person name="Kassem M."/>
            <person name="Mann M."/>
            <person name="Olsen J.V."/>
            <person name="Blagoev B."/>
        </authorList>
    </citation>
    <scope>PHOSPHORYLATION [LARGE SCALE ANALYSIS] AT SER-192 AND SER-195 (ISOFORM 2)</scope>
    <scope>PHOSPHORYLATION [LARGE SCALE ANALYSIS] AT SER-153 AND SER-156 (ISOFORM 3)</scope>
    <scope>IDENTIFICATION BY MASS SPECTROMETRY [LARGE SCALE ANALYSIS]</scope>
</reference>
<reference key="11">
    <citation type="journal article" date="2013" name="J. Proteome Res.">
        <title>Toward a comprehensive characterization of a human cancer cell phosphoproteome.</title>
        <authorList>
            <person name="Zhou H."/>
            <person name="Di Palma S."/>
            <person name="Preisinger C."/>
            <person name="Peng M."/>
            <person name="Polat A.N."/>
            <person name="Heck A.J."/>
            <person name="Mohammed S."/>
        </authorList>
    </citation>
    <scope>PHOSPHORYLATION [LARGE SCALE ANALYSIS] AT SER-173</scope>
    <scope>IDENTIFICATION BY MASS SPECTROMETRY [LARGE SCALE ANALYSIS]</scope>
    <source>
        <tissue>Cervix carcinoma</tissue>
        <tissue>Erythroleukemia</tissue>
    </source>
</reference>
<reference key="12">
    <citation type="journal article" date="2014" name="J. Proteomics">
        <title>An enzyme assisted RP-RPLC approach for in-depth analysis of human liver phosphoproteome.</title>
        <authorList>
            <person name="Bian Y."/>
            <person name="Song C."/>
            <person name="Cheng K."/>
            <person name="Dong M."/>
            <person name="Wang F."/>
            <person name="Huang J."/>
            <person name="Sun D."/>
            <person name="Wang L."/>
            <person name="Ye M."/>
            <person name="Zou H."/>
        </authorList>
    </citation>
    <scope>PHOSPHORYLATION [LARGE SCALE ANALYSIS] AT SER-570</scope>
    <scope>PHOSPHORYLATION [LARGE SCALE ANALYSIS] AT SER-192 (ISOFORM 2)</scope>
    <scope>PHOSPHORYLATION [LARGE SCALE ANALYSIS] AT SER-153 (ISOFORM 3)</scope>
    <scope>IDENTIFICATION BY MASS SPECTROMETRY [LARGE SCALE ANALYSIS]</scope>
    <source>
        <tissue>Liver</tissue>
    </source>
</reference>
<evidence type="ECO:0000250" key="1"/>
<evidence type="ECO:0000250" key="2">
    <source>
        <dbReference type="UniProtKB" id="Q8CHU3"/>
    </source>
</evidence>
<evidence type="ECO:0000250" key="3">
    <source>
        <dbReference type="UniProtKB" id="Q9Z1Z3"/>
    </source>
</evidence>
<evidence type="ECO:0000255" key="4">
    <source>
        <dbReference type="PROSITE-ProRule" id="PRU00213"/>
    </source>
</evidence>
<evidence type="ECO:0000255" key="5">
    <source>
        <dbReference type="PROSITE-ProRule" id="PRU00243"/>
    </source>
</evidence>
<evidence type="ECO:0000256" key="6">
    <source>
        <dbReference type="SAM" id="MobiDB-lite"/>
    </source>
</evidence>
<evidence type="ECO:0000269" key="7">
    <source>
    </source>
</evidence>
<evidence type="ECO:0000269" key="8">
    <source>
    </source>
</evidence>
<evidence type="ECO:0000269" key="9">
    <source>
    </source>
</evidence>
<evidence type="ECO:0000269" key="10">
    <source>
    </source>
</evidence>
<evidence type="ECO:0000269" key="11">
    <source>
    </source>
</evidence>
<evidence type="ECO:0000269" key="12">
    <source ref="5"/>
</evidence>
<evidence type="ECO:0000303" key="13">
    <source>
    </source>
</evidence>
<evidence type="ECO:0000303" key="14">
    <source>
    </source>
</evidence>
<evidence type="ECO:0000305" key="15"/>
<evidence type="ECO:0007744" key="16">
    <source>
    </source>
</evidence>
<evidence type="ECO:0007744" key="17">
    <source>
    </source>
</evidence>
<evidence type="ECO:0007744" key="18">
    <source>
    </source>
</evidence>
<evidence type="ECO:0007744" key="19">
    <source>
    </source>
</evidence>
<proteinExistence type="evidence at protein level"/>
<accession>O95208</accession>
<accession>A8MTV8</accession>
<accession>B3KRX8</accession>
<accession>E9PBC2</accession>
<accession>O95207</accession>
<accession>Q52LD0</accession>
<accession>Q9H7Z2</accession>
<accession>Q9UPT7</accession>